<feature type="signal peptide" evidence="1">
    <location>
        <begin position="1"/>
        <end position="19"/>
    </location>
</feature>
<feature type="chain" id="PRO_0000018237" description="Outer membrane lipoprotein omp10">
    <location>
        <begin position="20"/>
        <end position="126"/>
    </location>
</feature>
<feature type="lipid moiety-binding region" description="N-palmitoyl cysteine" evidence="1">
    <location>
        <position position="20"/>
    </location>
</feature>
<feature type="lipid moiety-binding region" description="S-diacylglycerol cysteine" evidence="1">
    <location>
        <position position="20"/>
    </location>
</feature>
<organism>
    <name type="scientific">Brucella abortus biovar 1 (strain 9-941)</name>
    <dbReference type="NCBI Taxonomy" id="262698"/>
    <lineage>
        <taxon>Bacteria</taxon>
        <taxon>Pseudomonadati</taxon>
        <taxon>Pseudomonadota</taxon>
        <taxon>Alphaproteobacteria</taxon>
        <taxon>Hyphomicrobiales</taxon>
        <taxon>Brucellaceae</taxon>
        <taxon>Brucella/Ochrobactrum group</taxon>
        <taxon>Brucella</taxon>
    </lineage>
</organism>
<protein>
    <recommendedName>
        <fullName>Outer membrane lipoprotein omp10</fullName>
    </recommendedName>
    <alternativeName>
        <fullName>10 kDa OMP</fullName>
    </alternativeName>
    <alternativeName>
        <fullName>Minor outer membrane protein omp10</fullName>
    </alternativeName>
</protein>
<evidence type="ECO:0000305" key="1"/>
<accession>P0A3P0</accession>
<accession>Q44661</accession>
<accession>Q57A06</accession>
<accession>Q93TG3</accession>
<reference key="1">
    <citation type="journal article" date="1996" name="Infect. Immun.">
        <title>Molecular characterization, occurrence, and immunogenicity in infected sheep and cattle of two minor outer membrane proteins of Brucella abortus.</title>
        <authorList>
            <person name="Tibor A."/>
            <person name="Saman E."/>
            <person name="de Wergifosse P."/>
            <person name="Cloeckaert A."/>
            <person name="Limet J.N."/>
            <person name="Letesson J.-J."/>
        </authorList>
    </citation>
    <scope>NUCLEOTIDE SEQUENCE [GENOMIC DNA]</scope>
    <source>
        <strain>544 / Biovar 1</strain>
    </source>
</reference>
<reference key="2">
    <citation type="submission" date="2001-03" db="EMBL/GenBank/DDBJ databases">
        <title>Omp10 gene is located upstream of hemH in Brucella.</title>
        <authorList>
            <person name="Tibor A."/>
            <person name="Aidant N."/>
            <person name="Letesson J.-J."/>
        </authorList>
    </citation>
    <scope>NUCLEOTIDE SEQUENCE [GENOMIC DNA]</scope>
    <source>
        <strain>544 / Biovar 1</strain>
    </source>
</reference>
<reference key="3">
    <citation type="journal article" date="2005" name="J. Bacteriol.">
        <title>Completion of the genome sequence of Brucella abortus and comparison to the highly similar genomes of Brucella melitensis and Brucella suis.</title>
        <authorList>
            <person name="Halling S.M."/>
            <person name="Peterson-Burch B.D."/>
            <person name="Bricker B.J."/>
            <person name="Zuerner R.L."/>
            <person name="Qing Z."/>
            <person name="Li L.-L."/>
            <person name="Kapur V."/>
            <person name="Alt D.P."/>
            <person name="Olsen S.C."/>
        </authorList>
    </citation>
    <scope>NUCLEOTIDE SEQUENCE [LARGE SCALE GENOMIC DNA]</scope>
    <source>
        <strain>9-941</strain>
    </source>
</reference>
<reference key="4">
    <citation type="journal article" date="1999" name="Infect. Immun.">
        <title>Outer membrane proteins Omp10, Omp16, and Omp19 of Brucella spp. are lipoproteins.</title>
        <authorList>
            <person name="Tibor A."/>
            <person name="Decelle B."/>
            <person name="Letesson J.-J."/>
        </authorList>
    </citation>
    <scope>CHARACTERIZATION</scope>
</reference>
<dbReference type="EMBL" id="L27995">
    <property type="protein sequence ID" value="AAB06276.1"/>
    <property type="molecule type" value="Genomic_DNA"/>
</dbReference>
<dbReference type="EMBL" id="AF358663">
    <property type="protein sequence ID" value="AAK43711.1"/>
    <property type="status" value="ALT_INIT"/>
    <property type="molecule type" value="Genomic_DNA"/>
</dbReference>
<dbReference type="EMBL" id="AE017224">
    <property type="protein sequence ID" value="AAX75528.1"/>
    <property type="molecule type" value="Genomic_DNA"/>
</dbReference>
<dbReference type="RefSeq" id="WP_002966502.1">
    <property type="nucleotide sequence ID" value="NC_006933.1"/>
</dbReference>
<dbReference type="EnsemblBacteria" id="AAX75528">
    <property type="protein sequence ID" value="AAX75528"/>
    <property type="gene ID" value="BruAb2_0077"/>
</dbReference>
<dbReference type="GeneID" id="97535703"/>
<dbReference type="KEGG" id="bmb:BruAb2_0077"/>
<dbReference type="HOGENOM" id="CLU_136213_1_0_5"/>
<dbReference type="PRO" id="PR:P0A3P0"/>
<dbReference type="Proteomes" id="UP000000540">
    <property type="component" value="Chromosome II"/>
</dbReference>
<dbReference type="GO" id="GO:0009279">
    <property type="term" value="C:cell outer membrane"/>
    <property type="evidence" value="ECO:0007669"/>
    <property type="project" value="UniProtKB-SubCell"/>
</dbReference>
<dbReference type="InterPro" id="IPR049857">
    <property type="entry name" value="Omp10-like"/>
</dbReference>
<dbReference type="NCBIfam" id="NF041251">
    <property type="entry name" value="omp10_alpha_prot"/>
    <property type="match status" value="1"/>
</dbReference>
<dbReference type="PROSITE" id="PS51257">
    <property type="entry name" value="PROKAR_LIPOPROTEIN"/>
    <property type="match status" value="1"/>
</dbReference>
<name>OMP10_BRUAB</name>
<proteinExistence type="evidence at protein level"/>
<gene>
    <name type="primary">omp10</name>
    <name type="ordered locus">BruAb2_0077</name>
</gene>
<comment type="subcellular location">
    <subcellularLocation>
        <location>Cell outer membrane</location>
        <topology>Lipid-anchor</topology>
    </subcellularLocation>
</comment>
<comment type="miscellaneous">
    <text>Elicits an immune response in B.melitensis-infected sheep but not in B.abortus-infected cattle.</text>
</comment>
<comment type="similarity">
    <text evidence="1">Belongs to the rhizobiaceae omp10 lipoprotein family.</text>
</comment>
<comment type="sequence caution" evidence="1">
    <conflict type="erroneous initiation">
        <sequence resource="EMBL-CDS" id="AAK43711"/>
    </conflict>
</comment>
<sequence length="126" mass="13260">MKRFRIVAPLALMSLALAACETTGPGSGNAPIIAHTPAGIEGSWVDPNGIASSFNGGIFETRTTDTNEKLAEGNYLYLSPQLVEINMRSIVRGTTSKVNCALVSPTQLNCTSSAGSRFSLTRRNAG</sequence>
<keyword id="KW-0998">Cell outer membrane</keyword>
<keyword id="KW-0449">Lipoprotein</keyword>
<keyword id="KW-0472">Membrane</keyword>
<keyword id="KW-0564">Palmitate</keyword>
<keyword id="KW-0732">Signal</keyword>